<feature type="chain" id="PRO_0000147698" description="GTP cyclohydrolase FolE2">
    <location>
        <begin position="1"/>
        <end position="272"/>
    </location>
</feature>
<feature type="site" description="May be catalytically important" evidence="1">
    <location>
        <position position="154"/>
    </location>
</feature>
<name>GCH4_AROAE</name>
<organism>
    <name type="scientific">Aromatoleum aromaticum (strain DSM 19018 / LMG 30748 / EbN1)</name>
    <name type="common">Azoarcus sp. (strain EbN1)</name>
    <dbReference type="NCBI Taxonomy" id="76114"/>
    <lineage>
        <taxon>Bacteria</taxon>
        <taxon>Pseudomonadati</taxon>
        <taxon>Pseudomonadota</taxon>
        <taxon>Betaproteobacteria</taxon>
        <taxon>Rhodocyclales</taxon>
        <taxon>Rhodocyclaceae</taxon>
        <taxon>Aromatoleum</taxon>
    </lineage>
</organism>
<gene>
    <name evidence="1" type="primary">folE2</name>
    <name type="ordered locus">AZOSEA25100</name>
    <name type="ORF">ebA4438</name>
</gene>
<comment type="function">
    <text evidence="1">Converts GTP to 7,8-dihydroneopterin triphosphate.</text>
</comment>
<comment type="catalytic activity">
    <reaction evidence="1">
        <text>GTP + H2O = 7,8-dihydroneopterin 3'-triphosphate + formate + H(+)</text>
        <dbReference type="Rhea" id="RHEA:17473"/>
        <dbReference type="ChEBI" id="CHEBI:15377"/>
        <dbReference type="ChEBI" id="CHEBI:15378"/>
        <dbReference type="ChEBI" id="CHEBI:15740"/>
        <dbReference type="ChEBI" id="CHEBI:37565"/>
        <dbReference type="ChEBI" id="CHEBI:58462"/>
        <dbReference type="EC" id="3.5.4.16"/>
    </reaction>
</comment>
<comment type="pathway">
    <text evidence="1">Cofactor biosynthesis; 7,8-dihydroneopterin triphosphate biosynthesis; 7,8-dihydroneopterin triphosphate from GTP: step 1/1.</text>
</comment>
<comment type="similarity">
    <text evidence="1">Belongs to the GTP cyclohydrolase IV family.</text>
</comment>
<comment type="sequence caution" evidence="2">
    <conflict type="erroneous initiation">
        <sequence resource="EMBL-CDS" id="CAI08635"/>
    </conflict>
</comment>
<sequence length="272" mass="30684">MTSQQAHAIPDVQNLNDSRKLAIDKVGIKSIRHPVRVSDKNGGVQHTIAVFNMYVGLPHNFKGTHMSRFIEIINGNEREISVESIEPMLREMVKRLEAETGQIELTFPYFINKSAPISGVQSLMDYEVTFTAEIREGGAYTFTMKTVVPVTSLCPCSKKISEYGAHNQRSHVTVTAQTNSFLWIEELVQLVESQASCQLYGLLKRPDEKYVTEHAYDNPKFVEDMVRDVAGLLNAEARIDCYRVESENFESIHNHSAYALIECDKRLVVGAN</sequence>
<reference key="1">
    <citation type="journal article" date="2005" name="Arch. Microbiol.">
        <title>The genome sequence of an anaerobic aromatic-degrading denitrifying bacterium, strain EbN1.</title>
        <authorList>
            <person name="Rabus R."/>
            <person name="Kube M."/>
            <person name="Heider J."/>
            <person name="Beck A."/>
            <person name="Heitmann K."/>
            <person name="Widdel F."/>
            <person name="Reinhardt R."/>
        </authorList>
    </citation>
    <scope>NUCLEOTIDE SEQUENCE [LARGE SCALE GENOMIC DNA]</scope>
    <source>
        <strain>DSM 19018 / LMG 30748 / EbN1</strain>
    </source>
</reference>
<accession>Q5P229</accession>
<dbReference type="EC" id="3.5.4.16" evidence="1"/>
<dbReference type="EMBL" id="CR555306">
    <property type="protein sequence ID" value="CAI08635.1"/>
    <property type="status" value="ALT_INIT"/>
    <property type="molecule type" value="Genomic_DNA"/>
</dbReference>
<dbReference type="RefSeq" id="WP_041646308.1">
    <property type="nucleotide sequence ID" value="NC_006513.1"/>
</dbReference>
<dbReference type="SMR" id="Q5P229"/>
<dbReference type="STRING" id="76114.ebA4438"/>
<dbReference type="KEGG" id="eba:ebA4438"/>
<dbReference type="eggNOG" id="COG1469">
    <property type="taxonomic scope" value="Bacteria"/>
</dbReference>
<dbReference type="HOGENOM" id="CLU_062816_1_1_4"/>
<dbReference type="OrthoDB" id="9774824at2"/>
<dbReference type="UniPathway" id="UPA00848">
    <property type="reaction ID" value="UER00151"/>
</dbReference>
<dbReference type="Proteomes" id="UP000006552">
    <property type="component" value="Chromosome"/>
</dbReference>
<dbReference type="GO" id="GO:0003934">
    <property type="term" value="F:GTP cyclohydrolase I activity"/>
    <property type="evidence" value="ECO:0007669"/>
    <property type="project" value="UniProtKB-UniRule"/>
</dbReference>
<dbReference type="GO" id="GO:0046654">
    <property type="term" value="P:tetrahydrofolate biosynthetic process"/>
    <property type="evidence" value="ECO:0007669"/>
    <property type="project" value="UniProtKB-UniRule"/>
</dbReference>
<dbReference type="Gene3D" id="3.10.270.10">
    <property type="entry name" value="Urate Oxidase"/>
    <property type="match status" value="1"/>
</dbReference>
<dbReference type="HAMAP" id="MF_01527_B">
    <property type="entry name" value="GTP_cyclohydrol_B"/>
    <property type="match status" value="1"/>
</dbReference>
<dbReference type="InterPro" id="IPR022838">
    <property type="entry name" value="GTP_cyclohydrolase_FolE2"/>
</dbReference>
<dbReference type="InterPro" id="IPR003801">
    <property type="entry name" value="GTP_cyclohydrolase_FolE2/MptA"/>
</dbReference>
<dbReference type="NCBIfam" id="NF010200">
    <property type="entry name" value="PRK13674.1-1"/>
    <property type="match status" value="1"/>
</dbReference>
<dbReference type="PANTHER" id="PTHR36445">
    <property type="entry name" value="GTP CYCLOHYDROLASE MPTA"/>
    <property type="match status" value="1"/>
</dbReference>
<dbReference type="PANTHER" id="PTHR36445:SF1">
    <property type="entry name" value="GTP CYCLOHYDROLASE MPTA"/>
    <property type="match status" value="1"/>
</dbReference>
<dbReference type="Pfam" id="PF02649">
    <property type="entry name" value="GCHY-1"/>
    <property type="match status" value="1"/>
</dbReference>
<protein>
    <recommendedName>
        <fullName evidence="1">GTP cyclohydrolase FolE2</fullName>
        <ecNumber evidence="1">3.5.4.16</ecNumber>
    </recommendedName>
</protein>
<keyword id="KW-0378">Hydrolase</keyword>
<keyword id="KW-1185">Reference proteome</keyword>
<evidence type="ECO:0000255" key="1">
    <source>
        <dbReference type="HAMAP-Rule" id="MF_01527"/>
    </source>
</evidence>
<evidence type="ECO:0000305" key="2"/>
<proteinExistence type="inferred from homology"/>